<evidence type="ECO:0000255" key="1">
    <source>
        <dbReference type="HAMAP-Rule" id="MF_00424"/>
    </source>
</evidence>
<proteinExistence type="inferred from homology"/>
<keyword id="KW-0963">Cytoplasm</keyword>
<keyword id="KW-0648">Protein biosynthesis</keyword>
<keyword id="KW-1185">Reference proteome</keyword>
<sequence length="416" mass="46717">MSSDAQEASDDRRKYEFRKVIEELRDFEGSGTQLVTIYIPEDRQVSDVVAHVTQEHSEASNIKSKQTRTAVQDALTSIKDRLRYYDTFPPENGMVIFSGAIDAGGGQTDMVTRTLESPPQPVESFRYHCDSAFLTEPLEHMLEDSGLFGLIVLDRREANVGWLKGKRVEPVKSASSLVPGKQRKGGQSAQRFARLRLEAIDNFYQEVAGMADDLFVDKRHELDGILVGGPSPTKDEFLDGDYLHHELQDKVLGKFDVAYTDESGLKDLVDNASEALADQEIVEDKRHMDEFFENLHTGEEATYGFDQTRRNLIMGSVDRLLISEDLRSDVVVYECPNGHEEYEVVDSRHSTPSHECSECGEEADVDEREDVIEHLMSIAEQRGTDTKFISTDFEKGEQLLDAFGGIAGILRYSTGV</sequence>
<protein>
    <recommendedName>
        <fullName evidence="1">Peptide chain release factor subunit 1</fullName>
    </recommendedName>
    <alternativeName>
        <fullName evidence="1">Translation termination factor aRF1</fullName>
    </alternativeName>
</protein>
<dbReference type="EMBL" id="CP001365">
    <property type="protein sequence ID" value="ACM55775.1"/>
    <property type="molecule type" value="Genomic_DNA"/>
</dbReference>
<dbReference type="RefSeq" id="WP_012659417.1">
    <property type="nucleotide sequence ID" value="NC_012029.1"/>
</dbReference>
<dbReference type="SMR" id="B9LRF2"/>
<dbReference type="GeneID" id="7402099"/>
<dbReference type="KEGG" id="hla:Hlac_0170"/>
<dbReference type="eggNOG" id="arCOG01742">
    <property type="taxonomic scope" value="Archaea"/>
</dbReference>
<dbReference type="HOGENOM" id="CLU_035759_3_0_2"/>
<dbReference type="Proteomes" id="UP000000740">
    <property type="component" value="Chromosome 1"/>
</dbReference>
<dbReference type="GO" id="GO:0005737">
    <property type="term" value="C:cytoplasm"/>
    <property type="evidence" value="ECO:0007669"/>
    <property type="project" value="UniProtKB-SubCell"/>
</dbReference>
<dbReference type="GO" id="GO:0016149">
    <property type="term" value="F:translation release factor activity, codon specific"/>
    <property type="evidence" value="ECO:0007669"/>
    <property type="project" value="UniProtKB-UniRule"/>
</dbReference>
<dbReference type="FunFam" id="3.30.420.60:FF:000003">
    <property type="entry name" value="Peptide chain release factor subunit 1"/>
    <property type="match status" value="1"/>
</dbReference>
<dbReference type="FunFam" id="3.30.960.10:FF:000003">
    <property type="entry name" value="Peptide chain release factor subunit 1"/>
    <property type="match status" value="1"/>
</dbReference>
<dbReference type="Gene3D" id="1.20.5.170">
    <property type="match status" value="1"/>
</dbReference>
<dbReference type="Gene3D" id="3.30.1330.30">
    <property type="match status" value="1"/>
</dbReference>
<dbReference type="Gene3D" id="3.30.960.10">
    <property type="entry name" value="eRF1 domain 1"/>
    <property type="match status" value="1"/>
</dbReference>
<dbReference type="Gene3D" id="3.30.420.60">
    <property type="entry name" value="eRF1 domain 2"/>
    <property type="match status" value="1"/>
</dbReference>
<dbReference type="HAMAP" id="MF_00424">
    <property type="entry name" value="Rel_fact_arch_1"/>
    <property type="match status" value="1"/>
</dbReference>
<dbReference type="InterPro" id="IPR042226">
    <property type="entry name" value="eFR1_2_sf"/>
</dbReference>
<dbReference type="InterPro" id="IPR005140">
    <property type="entry name" value="eRF1_1_Pelota"/>
</dbReference>
<dbReference type="InterPro" id="IPR024049">
    <property type="entry name" value="eRF1_1_sf"/>
</dbReference>
<dbReference type="InterPro" id="IPR005141">
    <property type="entry name" value="eRF1_2"/>
</dbReference>
<dbReference type="InterPro" id="IPR005142">
    <property type="entry name" value="eRF1_3"/>
</dbReference>
<dbReference type="InterPro" id="IPR020918">
    <property type="entry name" value="Peptide_chain-rel_aRF1"/>
</dbReference>
<dbReference type="InterPro" id="IPR004403">
    <property type="entry name" value="Peptide_chain-rel_eRF1/aRF1"/>
</dbReference>
<dbReference type="InterPro" id="IPR029064">
    <property type="entry name" value="Ribosomal_eL30-like_sf"/>
</dbReference>
<dbReference type="NCBIfam" id="TIGR03676">
    <property type="entry name" value="aRF1_eRF1"/>
    <property type="match status" value="1"/>
</dbReference>
<dbReference type="PANTHER" id="PTHR10113">
    <property type="entry name" value="PEPTIDE CHAIN RELEASE FACTOR SUBUNIT 1"/>
    <property type="match status" value="1"/>
</dbReference>
<dbReference type="Pfam" id="PF03463">
    <property type="entry name" value="eRF1_1"/>
    <property type="match status" value="1"/>
</dbReference>
<dbReference type="Pfam" id="PF03464">
    <property type="entry name" value="eRF1_2"/>
    <property type="match status" value="1"/>
</dbReference>
<dbReference type="Pfam" id="PF03465">
    <property type="entry name" value="eRF1_3"/>
    <property type="match status" value="1"/>
</dbReference>
<dbReference type="SMART" id="SM01194">
    <property type="entry name" value="eRF1_1"/>
    <property type="match status" value="1"/>
</dbReference>
<dbReference type="SUPFAM" id="SSF55315">
    <property type="entry name" value="L30e-like"/>
    <property type="match status" value="1"/>
</dbReference>
<dbReference type="SUPFAM" id="SSF55481">
    <property type="entry name" value="N-terminal domain of eukaryotic peptide chain release factor subunit 1, ERF1"/>
    <property type="match status" value="1"/>
</dbReference>
<dbReference type="SUPFAM" id="SSF53137">
    <property type="entry name" value="Translational machinery components"/>
    <property type="match status" value="1"/>
</dbReference>
<gene>
    <name evidence="1" type="primary">prf1</name>
    <name type="ordered locus">Hlac_0170</name>
</gene>
<organism>
    <name type="scientific">Halorubrum lacusprofundi (strain ATCC 49239 / DSM 5036 / JCM 8891 / ACAM 34)</name>
    <dbReference type="NCBI Taxonomy" id="416348"/>
    <lineage>
        <taxon>Archaea</taxon>
        <taxon>Methanobacteriati</taxon>
        <taxon>Methanobacteriota</taxon>
        <taxon>Stenosarchaea group</taxon>
        <taxon>Halobacteria</taxon>
        <taxon>Halobacteriales</taxon>
        <taxon>Haloferacaceae</taxon>
        <taxon>Halorubrum</taxon>
    </lineage>
</organism>
<accession>B9LRF2</accession>
<name>RF1_HALLT</name>
<comment type="function">
    <text evidence="1">Directs the termination of nascent peptide synthesis (translation) in response to the termination codons UAA, UAG and UGA.</text>
</comment>
<comment type="subunit">
    <text evidence="1">Heterodimer of two subunits, one of which binds GTP.</text>
</comment>
<comment type="subcellular location">
    <subcellularLocation>
        <location evidence="1">Cytoplasm</location>
    </subcellularLocation>
</comment>
<comment type="similarity">
    <text evidence="1">Belongs to the eukaryotic release factor 1 family.</text>
</comment>
<feature type="chain" id="PRO_1000134929" description="Peptide chain release factor subunit 1">
    <location>
        <begin position="1"/>
        <end position="416"/>
    </location>
</feature>
<reference key="1">
    <citation type="journal article" date="2016" name="Stand. Genomic Sci.">
        <title>Complete genome sequence of the Antarctic Halorubrum lacusprofundi type strain ACAM 34.</title>
        <authorList>
            <person name="Anderson I.J."/>
            <person name="DasSarma P."/>
            <person name="Lucas S."/>
            <person name="Copeland A."/>
            <person name="Lapidus A."/>
            <person name="Del Rio T.G."/>
            <person name="Tice H."/>
            <person name="Dalin E."/>
            <person name="Bruce D.C."/>
            <person name="Goodwin L."/>
            <person name="Pitluck S."/>
            <person name="Sims D."/>
            <person name="Brettin T.S."/>
            <person name="Detter J.C."/>
            <person name="Han C.S."/>
            <person name="Larimer F."/>
            <person name="Hauser L."/>
            <person name="Land M."/>
            <person name="Ivanova N."/>
            <person name="Richardson P."/>
            <person name="Cavicchioli R."/>
            <person name="DasSarma S."/>
            <person name="Woese C.R."/>
            <person name="Kyrpides N.C."/>
        </authorList>
    </citation>
    <scope>NUCLEOTIDE SEQUENCE [LARGE SCALE GENOMIC DNA]</scope>
    <source>
        <strain>ATCC 49239 / DSM 5036 / JCM 8891 / ACAM 34</strain>
    </source>
</reference>